<feature type="signal peptide" description="Or 26" evidence="1">
    <location>
        <begin position="1"/>
        <end position="19"/>
    </location>
</feature>
<feature type="chain" id="PRO_0000013723" description="Uncharacterized protein YpbG">
    <location>
        <begin position="20"/>
        <end position="259"/>
    </location>
</feature>
<feature type="binding site" evidence="1">
    <location>
        <begin position="214"/>
        <end position="221"/>
    </location>
    <ligand>
        <name>ATP</name>
        <dbReference type="ChEBI" id="CHEBI:30616"/>
    </ligand>
</feature>
<reference key="1">
    <citation type="journal article" date="1996" name="Microbiology">
        <title>Sequence analysis of the Bacillus subtilis chromosome region between the serA and kdg loci cloned in a yeast artificial chromosome.</title>
        <authorList>
            <person name="Sorokin A.V."/>
            <person name="Azevedo V."/>
            <person name="Zumstein E."/>
            <person name="Galleron N."/>
            <person name="Ehrlich S.D."/>
            <person name="Serror P."/>
        </authorList>
    </citation>
    <scope>NUCLEOTIDE SEQUENCE [GENOMIC DNA]</scope>
    <source>
        <strain>168 / Marburg / ATCC 6051 / DSM 10 / JCM 1465 / NBRC 13719 / NCIMB 3610 / NRRL NRS-744 / VKM B-501</strain>
    </source>
</reference>
<reference key="2">
    <citation type="journal article" date="1997" name="Nature">
        <title>The complete genome sequence of the Gram-positive bacterium Bacillus subtilis.</title>
        <authorList>
            <person name="Kunst F."/>
            <person name="Ogasawara N."/>
            <person name="Moszer I."/>
            <person name="Albertini A.M."/>
            <person name="Alloni G."/>
            <person name="Azevedo V."/>
            <person name="Bertero M.G."/>
            <person name="Bessieres P."/>
            <person name="Bolotin A."/>
            <person name="Borchert S."/>
            <person name="Borriss R."/>
            <person name="Boursier L."/>
            <person name="Brans A."/>
            <person name="Braun M."/>
            <person name="Brignell S.C."/>
            <person name="Bron S."/>
            <person name="Brouillet S."/>
            <person name="Bruschi C.V."/>
            <person name="Caldwell B."/>
            <person name="Capuano V."/>
            <person name="Carter N.M."/>
            <person name="Choi S.-K."/>
            <person name="Codani J.-J."/>
            <person name="Connerton I.F."/>
            <person name="Cummings N.J."/>
            <person name="Daniel R.A."/>
            <person name="Denizot F."/>
            <person name="Devine K.M."/>
            <person name="Duesterhoeft A."/>
            <person name="Ehrlich S.D."/>
            <person name="Emmerson P.T."/>
            <person name="Entian K.-D."/>
            <person name="Errington J."/>
            <person name="Fabret C."/>
            <person name="Ferrari E."/>
            <person name="Foulger D."/>
            <person name="Fritz C."/>
            <person name="Fujita M."/>
            <person name="Fujita Y."/>
            <person name="Fuma S."/>
            <person name="Galizzi A."/>
            <person name="Galleron N."/>
            <person name="Ghim S.-Y."/>
            <person name="Glaser P."/>
            <person name="Goffeau A."/>
            <person name="Golightly E.J."/>
            <person name="Grandi G."/>
            <person name="Guiseppi G."/>
            <person name="Guy B.J."/>
            <person name="Haga K."/>
            <person name="Haiech J."/>
            <person name="Harwood C.R."/>
            <person name="Henaut A."/>
            <person name="Hilbert H."/>
            <person name="Holsappel S."/>
            <person name="Hosono S."/>
            <person name="Hullo M.-F."/>
            <person name="Itaya M."/>
            <person name="Jones L.-M."/>
            <person name="Joris B."/>
            <person name="Karamata D."/>
            <person name="Kasahara Y."/>
            <person name="Klaerr-Blanchard M."/>
            <person name="Klein C."/>
            <person name="Kobayashi Y."/>
            <person name="Koetter P."/>
            <person name="Koningstein G."/>
            <person name="Krogh S."/>
            <person name="Kumano M."/>
            <person name="Kurita K."/>
            <person name="Lapidus A."/>
            <person name="Lardinois S."/>
            <person name="Lauber J."/>
            <person name="Lazarevic V."/>
            <person name="Lee S.-M."/>
            <person name="Levine A."/>
            <person name="Liu H."/>
            <person name="Masuda S."/>
            <person name="Mauel C."/>
            <person name="Medigue C."/>
            <person name="Medina N."/>
            <person name="Mellado R.P."/>
            <person name="Mizuno M."/>
            <person name="Moestl D."/>
            <person name="Nakai S."/>
            <person name="Noback M."/>
            <person name="Noone D."/>
            <person name="O'Reilly M."/>
            <person name="Ogawa K."/>
            <person name="Ogiwara A."/>
            <person name="Oudega B."/>
            <person name="Park S.-H."/>
            <person name="Parro V."/>
            <person name="Pohl T.M."/>
            <person name="Portetelle D."/>
            <person name="Porwollik S."/>
            <person name="Prescott A.M."/>
            <person name="Presecan E."/>
            <person name="Pujic P."/>
            <person name="Purnelle B."/>
            <person name="Rapoport G."/>
            <person name="Rey M."/>
            <person name="Reynolds S."/>
            <person name="Rieger M."/>
            <person name="Rivolta C."/>
            <person name="Rocha E."/>
            <person name="Roche B."/>
            <person name="Rose M."/>
            <person name="Sadaie Y."/>
            <person name="Sato T."/>
            <person name="Scanlan E."/>
            <person name="Schleich S."/>
            <person name="Schroeter R."/>
            <person name="Scoffone F."/>
            <person name="Sekiguchi J."/>
            <person name="Sekowska A."/>
            <person name="Seror S.J."/>
            <person name="Serror P."/>
            <person name="Shin B.-S."/>
            <person name="Soldo B."/>
            <person name="Sorokin A."/>
            <person name="Tacconi E."/>
            <person name="Takagi T."/>
            <person name="Takahashi H."/>
            <person name="Takemaru K."/>
            <person name="Takeuchi M."/>
            <person name="Tamakoshi A."/>
            <person name="Tanaka T."/>
            <person name="Terpstra P."/>
            <person name="Tognoni A."/>
            <person name="Tosato V."/>
            <person name="Uchiyama S."/>
            <person name="Vandenbol M."/>
            <person name="Vannier F."/>
            <person name="Vassarotti A."/>
            <person name="Viari A."/>
            <person name="Wambutt R."/>
            <person name="Wedler E."/>
            <person name="Wedler H."/>
            <person name="Weitzenegger T."/>
            <person name="Winters P."/>
            <person name="Wipat A."/>
            <person name="Yamamoto H."/>
            <person name="Yamane K."/>
            <person name="Yasumoto K."/>
            <person name="Yata K."/>
            <person name="Yoshida K."/>
            <person name="Yoshikawa H.-F."/>
            <person name="Zumstein E."/>
            <person name="Yoshikawa H."/>
            <person name="Danchin A."/>
        </authorList>
    </citation>
    <scope>NUCLEOTIDE SEQUENCE [LARGE SCALE GENOMIC DNA]</scope>
    <source>
        <strain>168</strain>
    </source>
</reference>
<reference key="3">
    <citation type="journal article" date="2007" name="J. Bacteriol.">
        <title>SigM-responsive genes of Bacillus subtilis and their promoters.</title>
        <authorList>
            <person name="Jervis A.J."/>
            <person name="Thackray P.D."/>
            <person name="Houston C.W."/>
            <person name="Horsburgh M.J."/>
            <person name="Moir A."/>
        </authorList>
    </citation>
    <scope>INDUCTION</scope>
    <source>
        <strain>168 / 1604</strain>
    </source>
</reference>
<keyword id="KW-0067">ATP-binding</keyword>
<keyword id="KW-0547">Nucleotide-binding</keyword>
<keyword id="KW-1185">Reference proteome</keyword>
<keyword id="KW-0732">Signal</keyword>
<evidence type="ECO:0000255" key="1"/>
<evidence type="ECO:0000269" key="2">
    <source>
    </source>
</evidence>
<dbReference type="EMBL" id="L47648">
    <property type="protein sequence ID" value="AAC83951.1"/>
    <property type="molecule type" value="Genomic_DNA"/>
</dbReference>
<dbReference type="EMBL" id="AL009126">
    <property type="protein sequence ID" value="CAB14214.1"/>
    <property type="molecule type" value="Genomic_DNA"/>
</dbReference>
<dbReference type="PIR" id="B69933">
    <property type="entry name" value="B69933"/>
</dbReference>
<dbReference type="RefSeq" id="NP_390179.1">
    <property type="nucleotide sequence ID" value="NC_000964.3"/>
</dbReference>
<dbReference type="RefSeq" id="WP_003230532.1">
    <property type="nucleotide sequence ID" value="NZ_OZ025638.1"/>
</dbReference>
<dbReference type="SMR" id="P50733"/>
<dbReference type="FunCoup" id="P50733">
    <property type="interactions" value="3"/>
</dbReference>
<dbReference type="STRING" id="224308.BSU22980"/>
<dbReference type="PaxDb" id="224308-BSU22980"/>
<dbReference type="EnsemblBacteria" id="CAB14214">
    <property type="protein sequence ID" value="CAB14214"/>
    <property type="gene ID" value="BSU_22980"/>
</dbReference>
<dbReference type="GeneID" id="938974"/>
<dbReference type="KEGG" id="bsu:BSU22980"/>
<dbReference type="PATRIC" id="fig|224308.179.peg.2505"/>
<dbReference type="eggNOG" id="COG1408">
    <property type="taxonomic scope" value="Bacteria"/>
</dbReference>
<dbReference type="InParanoid" id="P50733"/>
<dbReference type="OrthoDB" id="9780884at2"/>
<dbReference type="PhylomeDB" id="P50733"/>
<dbReference type="BioCyc" id="BSUB:BSU22980-MONOMER"/>
<dbReference type="Proteomes" id="UP000001570">
    <property type="component" value="Chromosome"/>
</dbReference>
<dbReference type="GO" id="GO:0016020">
    <property type="term" value="C:membrane"/>
    <property type="evidence" value="ECO:0007669"/>
    <property type="project" value="GOC"/>
</dbReference>
<dbReference type="GO" id="GO:0005524">
    <property type="term" value="F:ATP binding"/>
    <property type="evidence" value="ECO:0007669"/>
    <property type="project" value="UniProtKB-KW"/>
</dbReference>
<dbReference type="GO" id="GO:0008758">
    <property type="term" value="F:UDP-2,3-diacylglucosamine hydrolase activity"/>
    <property type="evidence" value="ECO:0000318"/>
    <property type="project" value="GO_Central"/>
</dbReference>
<dbReference type="GO" id="GO:0009245">
    <property type="term" value="P:lipid A biosynthetic process"/>
    <property type="evidence" value="ECO:0000318"/>
    <property type="project" value="GO_Central"/>
</dbReference>
<dbReference type="CDD" id="cd07385">
    <property type="entry name" value="MPP_YkuE_C"/>
    <property type="match status" value="1"/>
</dbReference>
<dbReference type="Gene3D" id="3.60.21.10">
    <property type="match status" value="1"/>
</dbReference>
<dbReference type="InterPro" id="IPR004843">
    <property type="entry name" value="Calcineurin-like_PHP_ApaH"/>
</dbReference>
<dbReference type="InterPro" id="IPR029052">
    <property type="entry name" value="Metallo-depent_PP-like"/>
</dbReference>
<dbReference type="InterPro" id="IPR051158">
    <property type="entry name" value="Metallophosphoesterase_sf"/>
</dbReference>
<dbReference type="PANTHER" id="PTHR31302:SF32">
    <property type="entry name" value="PHOSPHOESTERASE"/>
    <property type="match status" value="1"/>
</dbReference>
<dbReference type="PANTHER" id="PTHR31302">
    <property type="entry name" value="TRANSMEMBRANE PROTEIN WITH METALLOPHOSPHOESTERASE DOMAIN-RELATED"/>
    <property type="match status" value="1"/>
</dbReference>
<dbReference type="Pfam" id="PF00149">
    <property type="entry name" value="Metallophos"/>
    <property type="match status" value="1"/>
</dbReference>
<dbReference type="SUPFAM" id="SSF56300">
    <property type="entry name" value="Metallo-dependent phosphatases"/>
    <property type="match status" value="1"/>
</dbReference>
<accession>P50733</accession>
<gene>
    <name type="primary">ypbG</name>
    <name type="ordered locus">BSU22980</name>
</gene>
<organism>
    <name type="scientific">Bacillus subtilis (strain 168)</name>
    <dbReference type="NCBI Taxonomy" id="224308"/>
    <lineage>
        <taxon>Bacteria</taxon>
        <taxon>Bacillati</taxon>
        <taxon>Bacillota</taxon>
        <taxon>Bacilli</taxon>
        <taxon>Bacillales</taxon>
        <taxon>Bacillaceae</taxon>
        <taxon>Bacillus</taxon>
    </lineage>
</organism>
<sequence length="259" mass="28560">MKLSVKIAGVLTVAAAAMTAKMYATAKGNHLKTHTFPLSKMKGKPPLTIFFISDIHKRLIDQDLLEKARSHAPHLVIIGGDLAEGGVPSARIEENIKRLVHFGVPIVFVWGNNDYEVRQHKLYSIFKAHGVITLRNESVPFSYNGHTIAIAGVDDIRMEMDHYEEAIKELDESQLNILVCHNPEIHEQINEDDGIDVILSGHTHGGQIRFGKFGPYELGKTGIVKNAAYLISNGYGTTKVPLRLGAEPETHIVTLCGPE</sequence>
<comment type="induction">
    <text evidence="2">Transcribed under partial control of SigM ECF sigma factor (PubMed:17434969).</text>
</comment>
<protein>
    <recommendedName>
        <fullName>Uncharacterized protein YpbG</fullName>
    </recommendedName>
</protein>
<name>YPBG_BACSU</name>
<proteinExistence type="evidence at transcript level"/>